<reference key="1">
    <citation type="submission" date="2008-05" db="EMBL/GenBank/DDBJ databases">
        <title>Complete sequence of Rhodopseudomonas palustris TIE-1.</title>
        <authorList>
            <consortium name="US DOE Joint Genome Institute"/>
            <person name="Lucas S."/>
            <person name="Copeland A."/>
            <person name="Lapidus A."/>
            <person name="Glavina del Rio T."/>
            <person name="Dalin E."/>
            <person name="Tice H."/>
            <person name="Pitluck S."/>
            <person name="Chain P."/>
            <person name="Malfatti S."/>
            <person name="Shin M."/>
            <person name="Vergez L."/>
            <person name="Lang D."/>
            <person name="Schmutz J."/>
            <person name="Larimer F."/>
            <person name="Land M."/>
            <person name="Hauser L."/>
            <person name="Kyrpides N."/>
            <person name="Mikhailova N."/>
            <person name="Emerson D."/>
            <person name="Newman D.K."/>
            <person name="Roden E."/>
            <person name="Richardson P."/>
        </authorList>
    </citation>
    <scope>NUCLEOTIDE SEQUENCE [LARGE SCALE GENOMIC DNA]</scope>
    <source>
        <strain>TIE-1</strain>
    </source>
</reference>
<evidence type="ECO:0000255" key="1">
    <source>
        <dbReference type="HAMAP-Rule" id="MF_01813"/>
    </source>
</evidence>
<keyword id="KW-0474">Menaquinone biosynthesis</keyword>
<keyword id="KW-0489">Methyltransferase</keyword>
<keyword id="KW-0949">S-adenosyl-L-methionine</keyword>
<keyword id="KW-0808">Transferase</keyword>
<keyword id="KW-0831">Ubiquinone biosynthesis</keyword>
<sequence length="253" mass="28394">MTEPGETTHFGYRDVPLDEKQTLVNDVFHSVAGRYDLMNDLMSGGMHRLWKDVMITTLNPPRDDTPFRLLDVAGGTGDISFRAAKASGAGFHSTVCDINTDMLEVGRQRAVERNLDDKVDFVEGNAESLQFDDRSFDAYTIAFGIRNVPRIDLALKEAYRVLKPGSRFLCLEFSSVDVPGLSKLYDLFSFKVIPEIGRVVTGDADSYQYLVESIRKFPKPYDFAEMMRDAGFARANWQVMSGGIVALHSGWRL</sequence>
<organism>
    <name type="scientific">Rhodopseudomonas palustris (strain TIE-1)</name>
    <dbReference type="NCBI Taxonomy" id="395960"/>
    <lineage>
        <taxon>Bacteria</taxon>
        <taxon>Pseudomonadati</taxon>
        <taxon>Pseudomonadota</taxon>
        <taxon>Alphaproteobacteria</taxon>
        <taxon>Hyphomicrobiales</taxon>
        <taxon>Nitrobacteraceae</taxon>
        <taxon>Rhodopseudomonas</taxon>
    </lineage>
</organism>
<proteinExistence type="inferred from homology"/>
<protein>
    <recommendedName>
        <fullName evidence="1">Ubiquinone/menaquinone biosynthesis C-methyltransferase UbiE</fullName>
        <ecNumber evidence="1">2.1.1.163</ecNumber>
        <ecNumber evidence="1">2.1.1.201</ecNumber>
    </recommendedName>
    <alternativeName>
        <fullName evidence="1">2-methoxy-6-polyprenyl-1,4-benzoquinol methylase</fullName>
    </alternativeName>
    <alternativeName>
        <fullName evidence="1">Demethylmenaquinone methyltransferase</fullName>
    </alternativeName>
</protein>
<name>UBIE_RHOPT</name>
<comment type="function">
    <text evidence="1">Methyltransferase required for the conversion of demethylmenaquinol (DMKH2) to menaquinol (MKH2) and the conversion of 2-polyprenyl-6-methoxy-1,4-benzoquinol (DDMQH2) to 2-polyprenyl-3-methyl-6-methoxy-1,4-benzoquinol (DMQH2).</text>
</comment>
<comment type="catalytic activity">
    <reaction evidence="1">
        <text>a 2-demethylmenaquinol + S-adenosyl-L-methionine = a menaquinol + S-adenosyl-L-homocysteine + H(+)</text>
        <dbReference type="Rhea" id="RHEA:42640"/>
        <dbReference type="Rhea" id="RHEA-COMP:9539"/>
        <dbReference type="Rhea" id="RHEA-COMP:9563"/>
        <dbReference type="ChEBI" id="CHEBI:15378"/>
        <dbReference type="ChEBI" id="CHEBI:18151"/>
        <dbReference type="ChEBI" id="CHEBI:55437"/>
        <dbReference type="ChEBI" id="CHEBI:57856"/>
        <dbReference type="ChEBI" id="CHEBI:59789"/>
        <dbReference type="EC" id="2.1.1.163"/>
    </reaction>
</comment>
<comment type="catalytic activity">
    <reaction evidence="1">
        <text>a 2-methoxy-6-(all-trans-polyprenyl)benzene-1,4-diol + S-adenosyl-L-methionine = a 5-methoxy-2-methyl-3-(all-trans-polyprenyl)benzene-1,4-diol + S-adenosyl-L-homocysteine + H(+)</text>
        <dbReference type="Rhea" id="RHEA:28286"/>
        <dbReference type="Rhea" id="RHEA-COMP:10858"/>
        <dbReference type="Rhea" id="RHEA-COMP:10859"/>
        <dbReference type="ChEBI" id="CHEBI:15378"/>
        <dbReference type="ChEBI" id="CHEBI:57856"/>
        <dbReference type="ChEBI" id="CHEBI:59789"/>
        <dbReference type="ChEBI" id="CHEBI:84166"/>
        <dbReference type="ChEBI" id="CHEBI:84167"/>
        <dbReference type="EC" id="2.1.1.201"/>
    </reaction>
</comment>
<comment type="pathway">
    <text evidence="1">Quinol/quinone metabolism; menaquinone biosynthesis; menaquinol from 1,4-dihydroxy-2-naphthoate: step 2/2.</text>
</comment>
<comment type="pathway">
    <text evidence="1">Cofactor biosynthesis; ubiquinone biosynthesis.</text>
</comment>
<comment type="similarity">
    <text evidence="1">Belongs to the class I-like SAM-binding methyltransferase superfamily. MenG/UbiE family.</text>
</comment>
<dbReference type="EC" id="2.1.1.163" evidence="1"/>
<dbReference type="EC" id="2.1.1.201" evidence="1"/>
<dbReference type="EMBL" id="CP001096">
    <property type="protein sequence ID" value="ACE98648.1"/>
    <property type="molecule type" value="Genomic_DNA"/>
</dbReference>
<dbReference type="RefSeq" id="WP_011155654.1">
    <property type="nucleotide sequence ID" value="NC_011004.1"/>
</dbReference>
<dbReference type="SMR" id="B3Q619"/>
<dbReference type="GeneID" id="66891084"/>
<dbReference type="KEGG" id="rpt:Rpal_0086"/>
<dbReference type="HOGENOM" id="CLU_037990_0_1_5"/>
<dbReference type="OrthoDB" id="9808140at2"/>
<dbReference type="UniPathway" id="UPA00079">
    <property type="reaction ID" value="UER00169"/>
</dbReference>
<dbReference type="UniPathway" id="UPA00232"/>
<dbReference type="Proteomes" id="UP000001725">
    <property type="component" value="Chromosome"/>
</dbReference>
<dbReference type="GO" id="GO:0008425">
    <property type="term" value="F:2-methoxy-6-polyprenyl-1,4-benzoquinol methyltransferase activity"/>
    <property type="evidence" value="ECO:0007669"/>
    <property type="project" value="UniProtKB-UniRule"/>
</dbReference>
<dbReference type="GO" id="GO:0043770">
    <property type="term" value="F:demethylmenaquinone methyltransferase activity"/>
    <property type="evidence" value="ECO:0007669"/>
    <property type="project" value="UniProtKB-UniRule"/>
</dbReference>
<dbReference type="GO" id="GO:0009060">
    <property type="term" value="P:aerobic respiration"/>
    <property type="evidence" value="ECO:0007669"/>
    <property type="project" value="UniProtKB-UniRule"/>
</dbReference>
<dbReference type="GO" id="GO:0009234">
    <property type="term" value="P:menaquinone biosynthetic process"/>
    <property type="evidence" value="ECO:0007669"/>
    <property type="project" value="UniProtKB-UniRule"/>
</dbReference>
<dbReference type="GO" id="GO:0032259">
    <property type="term" value="P:methylation"/>
    <property type="evidence" value="ECO:0007669"/>
    <property type="project" value="UniProtKB-KW"/>
</dbReference>
<dbReference type="CDD" id="cd02440">
    <property type="entry name" value="AdoMet_MTases"/>
    <property type="match status" value="1"/>
</dbReference>
<dbReference type="Gene3D" id="3.40.50.150">
    <property type="entry name" value="Vaccinia Virus protein VP39"/>
    <property type="match status" value="1"/>
</dbReference>
<dbReference type="HAMAP" id="MF_01813">
    <property type="entry name" value="MenG_UbiE_methyltr"/>
    <property type="match status" value="1"/>
</dbReference>
<dbReference type="InterPro" id="IPR029063">
    <property type="entry name" value="SAM-dependent_MTases_sf"/>
</dbReference>
<dbReference type="InterPro" id="IPR004033">
    <property type="entry name" value="UbiE/COQ5_MeTrFase"/>
</dbReference>
<dbReference type="InterPro" id="IPR023576">
    <property type="entry name" value="UbiE/COQ5_MeTrFase_CS"/>
</dbReference>
<dbReference type="NCBIfam" id="TIGR01934">
    <property type="entry name" value="MenG_MenH_UbiE"/>
    <property type="match status" value="1"/>
</dbReference>
<dbReference type="NCBIfam" id="NF001242">
    <property type="entry name" value="PRK00216.1-3"/>
    <property type="match status" value="1"/>
</dbReference>
<dbReference type="PANTHER" id="PTHR43591:SF24">
    <property type="entry name" value="2-METHOXY-6-POLYPRENYL-1,4-BENZOQUINOL METHYLASE, MITOCHONDRIAL"/>
    <property type="match status" value="1"/>
</dbReference>
<dbReference type="PANTHER" id="PTHR43591">
    <property type="entry name" value="METHYLTRANSFERASE"/>
    <property type="match status" value="1"/>
</dbReference>
<dbReference type="Pfam" id="PF01209">
    <property type="entry name" value="Ubie_methyltran"/>
    <property type="match status" value="1"/>
</dbReference>
<dbReference type="SUPFAM" id="SSF53335">
    <property type="entry name" value="S-adenosyl-L-methionine-dependent methyltransferases"/>
    <property type="match status" value="1"/>
</dbReference>
<dbReference type="PROSITE" id="PS51608">
    <property type="entry name" value="SAM_MT_UBIE"/>
    <property type="match status" value="1"/>
</dbReference>
<dbReference type="PROSITE" id="PS01183">
    <property type="entry name" value="UBIE_1"/>
    <property type="match status" value="1"/>
</dbReference>
<dbReference type="PROSITE" id="PS01184">
    <property type="entry name" value="UBIE_2"/>
    <property type="match status" value="1"/>
</dbReference>
<accession>B3Q619</accession>
<gene>
    <name evidence="1" type="primary">ubiE</name>
    <name type="ordered locus">Rpal_0086</name>
</gene>
<feature type="chain" id="PRO_1000187794" description="Ubiquinone/menaquinone biosynthesis C-methyltransferase UbiE">
    <location>
        <begin position="1"/>
        <end position="253"/>
    </location>
</feature>
<feature type="binding site" evidence="1">
    <location>
        <position position="76"/>
    </location>
    <ligand>
        <name>S-adenosyl-L-methionine</name>
        <dbReference type="ChEBI" id="CHEBI:59789"/>
    </ligand>
</feature>
<feature type="binding site" evidence="1">
    <location>
        <position position="97"/>
    </location>
    <ligand>
        <name>S-adenosyl-L-methionine</name>
        <dbReference type="ChEBI" id="CHEBI:59789"/>
    </ligand>
</feature>
<feature type="binding site" evidence="1">
    <location>
        <begin position="125"/>
        <end position="126"/>
    </location>
    <ligand>
        <name>S-adenosyl-L-methionine</name>
        <dbReference type="ChEBI" id="CHEBI:59789"/>
    </ligand>
</feature>